<organism>
    <name type="scientific">Pyrococcus abyssi (strain GE5 / Orsay)</name>
    <dbReference type="NCBI Taxonomy" id="272844"/>
    <lineage>
        <taxon>Archaea</taxon>
        <taxon>Methanobacteriati</taxon>
        <taxon>Methanobacteriota</taxon>
        <taxon>Thermococci</taxon>
        <taxon>Thermococcales</taxon>
        <taxon>Thermococcaceae</taxon>
        <taxon>Pyrococcus</taxon>
    </lineage>
</organism>
<sequence length="239" mass="26153">MGKSLIQQRRGKGSPTFRSPSHRFRGAVKYIPLNYTQDKTLRGVVEEIMHDPGRTAPVARVRFENGMEKLIIAPEGLLVGQEIYIGPDAPIAIGNTLPLAKIPEGTYVYNIEGIPGDGGKYVRAGGTYALVVSREKDKVIVQLPSGELKAFNPNCRATIGVVAGGGRLEKPLVKAGKAYYKYKARNRFWPTPRGVKMNAVNHPFGGKEHHPGKPTTTSRRAPPGRKVGHIAARRTGRRK</sequence>
<name>RL2_PYRAB</name>
<accession>Q9V1T8</accession>
<accession>G8ZHX3</accession>
<dbReference type="EMBL" id="AJ248284">
    <property type="protein sequence ID" value="CAB49261.1"/>
    <property type="molecule type" value="Genomic_DNA"/>
</dbReference>
<dbReference type="EMBL" id="HE613800">
    <property type="protein sequence ID" value="CCE69716.1"/>
    <property type="molecule type" value="Genomic_DNA"/>
</dbReference>
<dbReference type="PIR" id="F75147">
    <property type="entry name" value="F75147"/>
</dbReference>
<dbReference type="RefSeq" id="WP_010867461.1">
    <property type="nucleotide sequence ID" value="NC_000868.1"/>
</dbReference>
<dbReference type="SMR" id="Q9V1T8"/>
<dbReference type="STRING" id="272844.PAB2122"/>
<dbReference type="KEGG" id="pab:PAB2122"/>
<dbReference type="PATRIC" id="fig|272844.11.peg.360"/>
<dbReference type="eggNOG" id="arCOG04067">
    <property type="taxonomic scope" value="Archaea"/>
</dbReference>
<dbReference type="HOGENOM" id="CLU_036235_0_1_2"/>
<dbReference type="OrthoDB" id="5987at2157"/>
<dbReference type="PhylomeDB" id="Q9V1T8"/>
<dbReference type="Proteomes" id="UP000000810">
    <property type="component" value="Chromosome"/>
</dbReference>
<dbReference type="Proteomes" id="UP000009139">
    <property type="component" value="Chromosome"/>
</dbReference>
<dbReference type="GO" id="GO:0022625">
    <property type="term" value="C:cytosolic large ribosomal subunit"/>
    <property type="evidence" value="ECO:0007669"/>
    <property type="project" value="TreeGrafter"/>
</dbReference>
<dbReference type="GO" id="GO:0019843">
    <property type="term" value="F:rRNA binding"/>
    <property type="evidence" value="ECO:0007669"/>
    <property type="project" value="UniProtKB-UniRule"/>
</dbReference>
<dbReference type="GO" id="GO:0003735">
    <property type="term" value="F:structural constituent of ribosome"/>
    <property type="evidence" value="ECO:0007669"/>
    <property type="project" value="InterPro"/>
</dbReference>
<dbReference type="GO" id="GO:0002181">
    <property type="term" value="P:cytoplasmic translation"/>
    <property type="evidence" value="ECO:0007669"/>
    <property type="project" value="TreeGrafter"/>
</dbReference>
<dbReference type="FunFam" id="2.30.30.30:FF:000001">
    <property type="entry name" value="50S ribosomal protein L2"/>
    <property type="match status" value="1"/>
</dbReference>
<dbReference type="FunFam" id="2.40.50.140:FF:000020">
    <property type="entry name" value="60S ribosomal protein L2"/>
    <property type="match status" value="1"/>
</dbReference>
<dbReference type="FunFam" id="4.10.950.10:FF:000002">
    <property type="entry name" value="60S ribosomal protein L2"/>
    <property type="match status" value="1"/>
</dbReference>
<dbReference type="Gene3D" id="2.30.30.30">
    <property type="match status" value="1"/>
</dbReference>
<dbReference type="Gene3D" id="2.40.50.140">
    <property type="entry name" value="Nucleic acid-binding proteins"/>
    <property type="match status" value="1"/>
</dbReference>
<dbReference type="Gene3D" id="4.10.950.10">
    <property type="entry name" value="Ribosomal protein L2, domain 3"/>
    <property type="match status" value="1"/>
</dbReference>
<dbReference type="HAMAP" id="MF_01320_A">
    <property type="entry name" value="Ribosomal_uL2_A"/>
    <property type="match status" value="1"/>
</dbReference>
<dbReference type="InterPro" id="IPR012340">
    <property type="entry name" value="NA-bd_OB-fold"/>
</dbReference>
<dbReference type="InterPro" id="IPR014722">
    <property type="entry name" value="Rib_uL2_dom2"/>
</dbReference>
<dbReference type="InterPro" id="IPR002171">
    <property type="entry name" value="Ribosomal_uL2"/>
</dbReference>
<dbReference type="InterPro" id="IPR023672">
    <property type="entry name" value="Ribosomal_uL2_arc_euk"/>
</dbReference>
<dbReference type="InterPro" id="IPR022669">
    <property type="entry name" value="Ribosomal_uL2_C"/>
</dbReference>
<dbReference type="InterPro" id="IPR014726">
    <property type="entry name" value="Ribosomal_uL2_dom3"/>
</dbReference>
<dbReference type="InterPro" id="IPR022666">
    <property type="entry name" value="Ribosomal_uL2_RNA-bd_dom"/>
</dbReference>
<dbReference type="InterPro" id="IPR008991">
    <property type="entry name" value="Translation_prot_SH3-like_sf"/>
</dbReference>
<dbReference type="NCBIfam" id="NF007180">
    <property type="entry name" value="PRK09612.1"/>
    <property type="match status" value="1"/>
</dbReference>
<dbReference type="PANTHER" id="PTHR13691:SF16">
    <property type="entry name" value="LARGE RIBOSOMAL SUBUNIT PROTEIN UL2"/>
    <property type="match status" value="1"/>
</dbReference>
<dbReference type="PANTHER" id="PTHR13691">
    <property type="entry name" value="RIBOSOMAL PROTEIN L2"/>
    <property type="match status" value="1"/>
</dbReference>
<dbReference type="Pfam" id="PF00181">
    <property type="entry name" value="Ribosomal_L2"/>
    <property type="match status" value="1"/>
</dbReference>
<dbReference type="Pfam" id="PF03947">
    <property type="entry name" value="Ribosomal_L2_C"/>
    <property type="match status" value="1"/>
</dbReference>
<dbReference type="PIRSF" id="PIRSF002158">
    <property type="entry name" value="Ribosomal_L2"/>
    <property type="match status" value="1"/>
</dbReference>
<dbReference type="SMART" id="SM01383">
    <property type="entry name" value="Ribosomal_L2"/>
    <property type="match status" value="1"/>
</dbReference>
<dbReference type="SMART" id="SM01382">
    <property type="entry name" value="Ribosomal_L2_C"/>
    <property type="match status" value="1"/>
</dbReference>
<dbReference type="SUPFAM" id="SSF50249">
    <property type="entry name" value="Nucleic acid-binding proteins"/>
    <property type="match status" value="1"/>
</dbReference>
<dbReference type="SUPFAM" id="SSF50104">
    <property type="entry name" value="Translation proteins SH3-like domain"/>
    <property type="match status" value="1"/>
</dbReference>
<gene>
    <name evidence="1" type="primary">rpl2</name>
    <name type="ordered locus">PYRAB03390</name>
    <name type="ORF">PAB2122</name>
</gene>
<comment type="function">
    <text evidence="1">One of the primary rRNA binding proteins. Required for association of the 30S and 50S subunits to form the 70S ribosome, for tRNA binding and peptide bond formation. It has been suggested to have peptidyltransferase activity; this is somewhat controversial. Makes several contacts with the 16S rRNA in the 70S ribosome.</text>
</comment>
<comment type="subunit">
    <text evidence="1">Part of the 50S ribosomal subunit. Forms a bridge to the 30S subunit in the 70S ribosome.</text>
</comment>
<comment type="similarity">
    <text evidence="1">Belongs to the universal ribosomal protein uL2 family.</text>
</comment>
<feature type="chain" id="PRO_0000129721" description="Large ribosomal subunit protein uL2">
    <location>
        <begin position="1"/>
        <end position="239"/>
    </location>
</feature>
<feature type="region of interest" description="Disordered" evidence="2">
    <location>
        <begin position="203"/>
        <end position="239"/>
    </location>
</feature>
<feature type="compositionally biased region" description="Basic residues" evidence="2">
    <location>
        <begin position="222"/>
        <end position="239"/>
    </location>
</feature>
<reference key="1">
    <citation type="journal article" date="2003" name="Mol. Microbiol.">
        <title>An integrated analysis of the genome of the hyperthermophilic archaeon Pyrococcus abyssi.</title>
        <authorList>
            <person name="Cohen G.N."/>
            <person name="Barbe V."/>
            <person name="Flament D."/>
            <person name="Galperin M."/>
            <person name="Heilig R."/>
            <person name="Lecompte O."/>
            <person name="Poch O."/>
            <person name="Prieur D."/>
            <person name="Querellou J."/>
            <person name="Ripp R."/>
            <person name="Thierry J.-C."/>
            <person name="Van der Oost J."/>
            <person name="Weissenbach J."/>
            <person name="Zivanovic Y."/>
            <person name="Forterre P."/>
        </authorList>
    </citation>
    <scope>NUCLEOTIDE SEQUENCE [LARGE SCALE GENOMIC DNA]</scope>
    <source>
        <strain>GE5 / Orsay</strain>
    </source>
</reference>
<reference key="2">
    <citation type="journal article" date="2012" name="Curr. Microbiol.">
        <title>Re-annotation of two hyperthermophilic archaea Pyrococcus abyssi GE5 and Pyrococcus furiosus DSM 3638.</title>
        <authorList>
            <person name="Gao J."/>
            <person name="Wang J."/>
        </authorList>
    </citation>
    <scope>GENOME REANNOTATION</scope>
    <source>
        <strain>GE5 / Orsay</strain>
    </source>
</reference>
<keyword id="KW-0687">Ribonucleoprotein</keyword>
<keyword id="KW-0689">Ribosomal protein</keyword>
<keyword id="KW-0694">RNA-binding</keyword>
<keyword id="KW-0699">rRNA-binding</keyword>
<protein>
    <recommendedName>
        <fullName evidence="1">Large ribosomal subunit protein uL2</fullName>
    </recommendedName>
    <alternativeName>
        <fullName evidence="3">50S ribosomal protein L2</fullName>
    </alternativeName>
</protein>
<evidence type="ECO:0000255" key="1">
    <source>
        <dbReference type="HAMAP-Rule" id="MF_01320"/>
    </source>
</evidence>
<evidence type="ECO:0000256" key="2">
    <source>
        <dbReference type="SAM" id="MobiDB-lite"/>
    </source>
</evidence>
<evidence type="ECO:0000305" key="3"/>
<proteinExistence type="inferred from homology"/>